<accession>B1JRC9</accession>
<evidence type="ECO:0000255" key="1">
    <source>
        <dbReference type="HAMAP-Rule" id="MF_00201"/>
    </source>
</evidence>
<reference key="1">
    <citation type="submission" date="2008-02" db="EMBL/GenBank/DDBJ databases">
        <title>Complete sequence of Yersinia pseudotuberculosis YPIII.</title>
        <authorList>
            <consortium name="US DOE Joint Genome Institute"/>
            <person name="Copeland A."/>
            <person name="Lucas S."/>
            <person name="Lapidus A."/>
            <person name="Glavina del Rio T."/>
            <person name="Dalin E."/>
            <person name="Tice H."/>
            <person name="Bruce D."/>
            <person name="Goodwin L."/>
            <person name="Pitluck S."/>
            <person name="Munk A.C."/>
            <person name="Brettin T."/>
            <person name="Detter J.C."/>
            <person name="Han C."/>
            <person name="Tapia R."/>
            <person name="Schmutz J."/>
            <person name="Larimer F."/>
            <person name="Land M."/>
            <person name="Hauser L."/>
            <person name="Challacombe J.F."/>
            <person name="Green L."/>
            <person name="Lindler L.E."/>
            <person name="Nikolich M.P."/>
            <person name="Richardson P."/>
        </authorList>
    </citation>
    <scope>NUCLEOTIDE SEQUENCE [LARGE SCALE GENOMIC DNA]</scope>
    <source>
        <strain>YPIII</strain>
    </source>
</reference>
<proteinExistence type="inferred from homology"/>
<organism>
    <name type="scientific">Yersinia pseudotuberculosis serotype O:3 (strain YPIII)</name>
    <dbReference type="NCBI Taxonomy" id="502800"/>
    <lineage>
        <taxon>Bacteria</taxon>
        <taxon>Pseudomonadati</taxon>
        <taxon>Pseudomonadota</taxon>
        <taxon>Gammaproteobacteria</taxon>
        <taxon>Enterobacterales</taxon>
        <taxon>Yersiniaceae</taxon>
        <taxon>Yersinia</taxon>
    </lineage>
</organism>
<comment type="function">
    <text evidence="1">Involved in DNA repair and RecF pathway recombination.</text>
</comment>
<comment type="similarity">
    <text evidence="1">Belongs to the RecO family.</text>
</comment>
<protein>
    <recommendedName>
        <fullName evidence="1">DNA repair protein RecO</fullName>
    </recommendedName>
    <alternativeName>
        <fullName evidence="1">Recombination protein O</fullName>
    </alternativeName>
</protein>
<keyword id="KW-0227">DNA damage</keyword>
<keyword id="KW-0233">DNA recombination</keyword>
<keyword id="KW-0234">DNA repair</keyword>
<gene>
    <name evidence="1" type="primary">recO</name>
    <name type="ordered locus">YPK_1191</name>
</gene>
<dbReference type="EMBL" id="CP000950">
    <property type="protein sequence ID" value="ACA67489.1"/>
    <property type="molecule type" value="Genomic_DNA"/>
</dbReference>
<dbReference type="RefSeq" id="WP_002209680.1">
    <property type="nucleotide sequence ID" value="NZ_CP009792.1"/>
</dbReference>
<dbReference type="SMR" id="B1JRC9"/>
<dbReference type="GeneID" id="57975971"/>
<dbReference type="KEGG" id="ypy:YPK_1191"/>
<dbReference type="PATRIC" id="fig|502800.11.peg.1826"/>
<dbReference type="GO" id="GO:0043590">
    <property type="term" value="C:bacterial nucleoid"/>
    <property type="evidence" value="ECO:0007669"/>
    <property type="project" value="TreeGrafter"/>
</dbReference>
<dbReference type="GO" id="GO:0006310">
    <property type="term" value="P:DNA recombination"/>
    <property type="evidence" value="ECO:0007669"/>
    <property type="project" value="UniProtKB-UniRule"/>
</dbReference>
<dbReference type="GO" id="GO:0006302">
    <property type="term" value="P:double-strand break repair"/>
    <property type="evidence" value="ECO:0007669"/>
    <property type="project" value="TreeGrafter"/>
</dbReference>
<dbReference type="Gene3D" id="2.40.50.140">
    <property type="entry name" value="Nucleic acid-binding proteins"/>
    <property type="match status" value="1"/>
</dbReference>
<dbReference type="Gene3D" id="1.20.1440.120">
    <property type="entry name" value="Recombination protein O, C-terminal domain"/>
    <property type="match status" value="1"/>
</dbReference>
<dbReference type="HAMAP" id="MF_00201">
    <property type="entry name" value="RecO"/>
    <property type="match status" value="1"/>
</dbReference>
<dbReference type="InterPro" id="IPR037278">
    <property type="entry name" value="ARFGAP/RecO"/>
</dbReference>
<dbReference type="InterPro" id="IPR022572">
    <property type="entry name" value="DNA_rep/recomb_RecO_N"/>
</dbReference>
<dbReference type="InterPro" id="IPR012340">
    <property type="entry name" value="NA-bd_OB-fold"/>
</dbReference>
<dbReference type="InterPro" id="IPR003717">
    <property type="entry name" value="RecO"/>
</dbReference>
<dbReference type="InterPro" id="IPR042242">
    <property type="entry name" value="RecO_C"/>
</dbReference>
<dbReference type="NCBIfam" id="TIGR00613">
    <property type="entry name" value="reco"/>
    <property type="match status" value="1"/>
</dbReference>
<dbReference type="PANTHER" id="PTHR33991">
    <property type="entry name" value="DNA REPAIR PROTEIN RECO"/>
    <property type="match status" value="1"/>
</dbReference>
<dbReference type="PANTHER" id="PTHR33991:SF1">
    <property type="entry name" value="DNA REPAIR PROTEIN RECO"/>
    <property type="match status" value="1"/>
</dbReference>
<dbReference type="Pfam" id="PF02565">
    <property type="entry name" value="RecO_C"/>
    <property type="match status" value="1"/>
</dbReference>
<dbReference type="Pfam" id="PF11967">
    <property type="entry name" value="RecO_N"/>
    <property type="match status" value="1"/>
</dbReference>
<dbReference type="SUPFAM" id="SSF57863">
    <property type="entry name" value="ArfGap/RecO-like zinc finger"/>
    <property type="match status" value="1"/>
</dbReference>
<dbReference type="SUPFAM" id="SSF50249">
    <property type="entry name" value="Nucleic acid-binding proteins"/>
    <property type="match status" value="1"/>
</dbReference>
<feature type="chain" id="PRO_1000099434" description="DNA repair protein RecO">
    <location>
        <begin position="1"/>
        <end position="241"/>
    </location>
</feature>
<sequence length="241" mass="26934">MDGWQRAFVLHGRPYSETSLMLDLFTEGEGRMRVLAKGARGRRSNLKGCLQPFTPLLVRWSGRGEVKTLRSAEPVSLALPLSGSMLYSGLYVNELLSRVLEHQTSYSALFFDYLHCLQALAGSDGSPEHALRQFELAMLANLGYGVDFLHCAGSGQPVSDTMTYRYREEKGFIASLVVDHYSFTGRQLLALANREFPDADTLRAAKRFTRIALKPYLGGKPLKSRELFRQFVIKPPADPSP</sequence>
<name>RECO_YERPY</name>